<accession>Q2NQM3</accession>
<keyword id="KW-0687">Ribonucleoprotein</keyword>
<keyword id="KW-0689">Ribosomal protein</keyword>
<keyword id="KW-0694">RNA-binding</keyword>
<keyword id="KW-0699">rRNA-binding</keyword>
<protein>
    <recommendedName>
        <fullName evidence="1">Large ribosomal subunit protein uL4</fullName>
    </recommendedName>
    <alternativeName>
        <fullName evidence="3">50S ribosomal protein L4</fullName>
    </alternativeName>
</protein>
<sequence>MELVLKDAQSALTVSETTFGRDFNEALVHQVVVAYAAGARQGSRGQKTRAEVTGSGKKPWRQKGTGRARSGSVKSPIWRSGGVTFAAKPQDHSQKVNKKMYRGALKSILSELVRQDRLIVVEQFSVKAPKTKLLAQKLKDMALEDVLIITGELDENLFLAARNLYKVDVRDANGIDPVSLIAFDKVVMTADAVKQVEEMLA</sequence>
<evidence type="ECO:0000255" key="1">
    <source>
        <dbReference type="HAMAP-Rule" id="MF_01328"/>
    </source>
</evidence>
<evidence type="ECO:0000256" key="2">
    <source>
        <dbReference type="SAM" id="MobiDB-lite"/>
    </source>
</evidence>
<evidence type="ECO:0000305" key="3"/>
<organism>
    <name type="scientific">Sodalis glossinidius (strain morsitans)</name>
    <dbReference type="NCBI Taxonomy" id="343509"/>
    <lineage>
        <taxon>Bacteria</taxon>
        <taxon>Pseudomonadati</taxon>
        <taxon>Pseudomonadota</taxon>
        <taxon>Gammaproteobacteria</taxon>
        <taxon>Enterobacterales</taxon>
        <taxon>Bruguierivoracaceae</taxon>
        <taxon>Sodalis</taxon>
    </lineage>
</organism>
<reference key="1">
    <citation type="journal article" date="2006" name="Genome Res.">
        <title>Massive genome erosion and functional adaptations provide insights into the symbiotic lifestyle of Sodalis glossinidius in the tsetse host.</title>
        <authorList>
            <person name="Toh H."/>
            <person name="Weiss B.L."/>
            <person name="Perkin S.A.H."/>
            <person name="Yamashita A."/>
            <person name="Oshima K."/>
            <person name="Hattori M."/>
            <person name="Aksoy S."/>
        </authorList>
    </citation>
    <scope>NUCLEOTIDE SEQUENCE [LARGE SCALE GENOMIC DNA]</scope>
    <source>
        <strain>morsitans</strain>
    </source>
</reference>
<gene>
    <name evidence="1" type="primary">rplD</name>
    <name type="ordered locus">SG2277</name>
</gene>
<proteinExistence type="inferred from homology"/>
<dbReference type="EMBL" id="AP008232">
    <property type="protein sequence ID" value="BAE75552.1"/>
    <property type="molecule type" value="Genomic_DNA"/>
</dbReference>
<dbReference type="RefSeq" id="WP_011412087.1">
    <property type="nucleotide sequence ID" value="NC_007712.1"/>
</dbReference>
<dbReference type="SMR" id="Q2NQM3"/>
<dbReference type="STRING" id="343509.SG2277"/>
<dbReference type="KEGG" id="sgl:SG2277"/>
<dbReference type="eggNOG" id="COG0088">
    <property type="taxonomic scope" value="Bacteria"/>
</dbReference>
<dbReference type="HOGENOM" id="CLU_041575_5_2_6"/>
<dbReference type="OrthoDB" id="9803201at2"/>
<dbReference type="BioCyc" id="SGLO343509:SGP1_RS20835-MONOMER"/>
<dbReference type="Proteomes" id="UP000001932">
    <property type="component" value="Chromosome"/>
</dbReference>
<dbReference type="GO" id="GO:1990904">
    <property type="term" value="C:ribonucleoprotein complex"/>
    <property type="evidence" value="ECO:0007669"/>
    <property type="project" value="UniProtKB-KW"/>
</dbReference>
<dbReference type="GO" id="GO:0005840">
    <property type="term" value="C:ribosome"/>
    <property type="evidence" value="ECO:0007669"/>
    <property type="project" value="UniProtKB-KW"/>
</dbReference>
<dbReference type="GO" id="GO:0019843">
    <property type="term" value="F:rRNA binding"/>
    <property type="evidence" value="ECO:0007669"/>
    <property type="project" value="UniProtKB-UniRule"/>
</dbReference>
<dbReference type="GO" id="GO:0003735">
    <property type="term" value="F:structural constituent of ribosome"/>
    <property type="evidence" value="ECO:0007669"/>
    <property type="project" value="InterPro"/>
</dbReference>
<dbReference type="GO" id="GO:0006412">
    <property type="term" value="P:translation"/>
    <property type="evidence" value="ECO:0007669"/>
    <property type="project" value="UniProtKB-UniRule"/>
</dbReference>
<dbReference type="FunFam" id="3.40.1370.10:FF:000001">
    <property type="entry name" value="50S ribosomal protein L4"/>
    <property type="match status" value="1"/>
</dbReference>
<dbReference type="Gene3D" id="3.40.1370.10">
    <property type="match status" value="1"/>
</dbReference>
<dbReference type="HAMAP" id="MF_01328_B">
    <property type="entry name" value="Ribosomal_uL4_B"/>
    <property type="match status" value="1"/>
</dbReference>
<dbReference type="InterPro" id="IPR002136">
    <property type="entry name" value="Ribosomal_uL4"/>
</dbReference>
<dbReference type="InterPro" id="IPR013005">
    <property type="entry name" value="Ribosomal_uL4-like"/>
</dbReference>
<dbReference type="InterPro" id="IPR023574">
    <property type="entry name" value="Ribosomal_uL4_dom_sf"/>
</dbReference>
<dbReference type="NCBIfam" id="TIGR03953">
    <property type="entry name" value="rplD_bact"/>
    <property type="match status" value="1"/>
</dbReference>
<dbReference type="PANTHER" id="PTHR10746">
    <property type="entry name" value="50S RIBOSOMAL PROTEIN L4"/>
    <property type="match status" value="1"/>
</dbReference>
<dbReference type="PANTHER" id="PTHR10746:SF6">
    <property type="entry name" value="LARGE RIBOSOMAL SUBUNIT PROTEIN UL4M"/>
    <property type="match status" value="1"/>
</dbReference>
<dbReference type="Pfam" id="PF00573">
    <property type="entry name" value="Ribosomal_L4"/>
    <property type="match status" value="1"/>
</dbReference>
<dbReference type="SUPFAM" id="SSF52166">
    <property type="entry name" value="Ribosomal protein L4"/>
    <property type="match status" value="1"/>
</dbReference>
<comment type="function">
    <text evidence="1">One of the primary rRNA binding proteins, this protein initially binds near the 5'-end of the 23S rRNA. It is important during the early stages of 50S assembly. It makes multiple contacts with different domains of the 23S rRNA in the assembled 50S subunit and ribosome.</text>
</comment>
<comment type="function">
    <text evidence="1">Forms part of the polypeptide exit tunnel.</text>
</comment>
<comment type="subunit">
    <text evidence="1">Part of the 50S ribosomal subunit.</text>
</comment>
<comment type="similarity">
    <text evidence="1">Belongs to the universal ribosomal protein uL4 family.</text>
</comment>
<name>RL4_SODGM</name>
<feature type="chain" id="PRO_0000242440" description="Large ribosomal subunit protein uL4">
    <location>
        <begin position="1"/>
        <end position="201"/>
    </location>
</feature>
<feature type="region of interest" description="Disordered" evidence="2">
    <location>
        <begin position="43"/>
        <end position="73"/>
    </location>
</feature>